<protein>
    <recommendedName>
        <fullName evidence="1">Large ribosomal subunit protein bL32</fullName>
    </recommendedName>
    <alternativeName>
        <fullName evidence="3">50S ribosomal protein L32</fullName>
    </alternativeName>
</protein>
<sequence length="57" mass="6430">MAVQQNKPTRSKRGMRRSHDALTAVTSLSVDKTSGEKHLRHHITADGFYRGRKVIAK</sequence>
<accession>B7LT49</accession>
<dbReference type="EMBL" id="CU928158">
    <property type="protein sequence ID" value="CAQ89353.1"/>
    <property type="molecule type" value="Genomic_DNA"/>
</dbReference>
<dbReference type="RefSeq" id="WP_000290724.1">
    <property type="nucleotide sequence ID" value="NC_011740.1"/>
</dbReference>
<dbReference type="SMR" id="B7LT49"/>
<dbReference type="GeneID" id="93754871"/>
<dbReference type="KEGG" id="efe:EFER_1839"/>
<dbReference type="HOGENOM" id="CLU_129084_2_1_6"/>
<dbReference type="OrthoDB" id="9801927at2"/>
<dbReference type="Proteomes" id="UP000000745">
    <property type="component" value="Chromosome"/>
</dbReference>
<dbReference type="GO" id="GO:0015934">
    <property type="term" value="C:large ribosomal subunit"/>
    <property type="evidence" value="ECO:0007669"/>
    <property type="project" value="InterPro"/>
</dbReference>
<dbReference type="GO" id="GO:0003735">
    <property type="term" value="F:structural constituent of ribosome"/>
    <property type="evidence" value="ECO:0007669"/>
    <property type="project" value="InterPro"/>
</dbReference>
<dbReference type="GO" id="GO:0006412">
    <property type="term" value="P:translation"/>
    <property type="evidence" value="ECO:0007669"/>
    <property type="project" value="UniProtKB-UniRule"/>
</dbReference>
<dbReference type="HAMAP" id="MF_00340">
    <property type="entry name" value="Ribosomal_bL32"/>
    <property type="match status" value="1"/>
</dbReference>
<dbReference type="InterPro" id="IPR002677">
    <property type="entry name" value="Ribosomal_bL32"/>
</dbReference>
<dbReference type="InterPro" id="IPR044957">
    <property type="entry name" value="Ribosomal_bL32_bact"/>
</dbReference>
<dbReference type="InterPro" id="IPR011332">
    <property type="entry name" value="Ribosomal_zn-bd"/>
</dbReference>
<dbReference type="NCBIfam" id="TIGR01031">
    <property type="entry name" value="rpmF_bact"/>
    <property type="match status" value="1"/>
</dbReference>
<dbReference type="PANTHER" id="PTHR35534">
    <property type="entry name" value="50S RIBOSOMAL PROTEIN L32"/>
    <property type="match status" value="1"/>
</dbReference>
<dbReference type="PANTHER" id="PTHR35534:SF1">
    <property type="entry name" value="LARGE RIBOSOMAL SUBUNIT PROTEIN BL32"/>
    <property type="match status" value="1"/>
</dbReference>
<dbReference type="Pfam" id="PF01783">
    <property type="entry name" value="Ribosomal_L32p"/>
    <property type="match status" value="1"/>
</dbReference>
<dbReference type="SUPFAM" id="SSF57829">
    <property type="entry name" value="Zn-binding ribosomal proteins"/>
    <property type="match status" value="1"/>
</dbReference>
<name>RL32_ESCF3</name>
<evidence type="ECO:0000255" key="1">
    <source>
        <dbReference type="HAMAP-Rule" id="MF_00340"/>
    </source>
</evidence>
<evidence type="ECO:0000256" key="2">
    <source>
        <dbReference type="SAM" id="MobiDB-lite"/>
    </source>
</evidence>
<evidence type="ECO:0000305" key="3"/>
<organism>
    <name type="scientific">Escherichia fergusonii (strain ATCC 35469 / DSM 13698 / CCUG 18766 / IAM 14443 / JCM 21226 / LMG 7866 / NBRC 102419 / NCTC 12128 / CDC 0568-73)</name>
    <dbReference type="NCBI Taxonomy" id="585054"/>
    <lineage>
        <taxon>Bacteria</taxon>
        <taxon>Pseudomonadati</taxon>
        <taxon>Pseudomonadota</taxon>
        <taxon>Gammaproteobacteria</taxon>
        <taxon>Enterobacterales</taxon>
        <taxon>Enterobacteriaceae</taxon>
        <taxon>Escherichia</taxon>
    </lineage>
</organism>
<comment type="similarity">
    <text evidence="1">Belongs to the bacterial ribosomal protein bL32 family.</text>
</comment>
<feature type="chain" id="PRO_1000120125" description="Large ribosomal subunit protein bL32">
    <location>
        <begin position="1"/>
        <end position="57"/>
    </location>
</feature>
<feature type="region of interest" description="Disordered" evidence="2">
    <location>
        <begin position="1"/>
        <end position="37"/>
    </location>
</feature>
<keyword id="KW-0687">Ribonucleoprotein</keyword>
<keyword id="KW-0689">Ribosomal protein</keyword>
<gene>
    <name evidence="1" type="primary">rpmF</name>
    <name type="ordered locus">EFER_1839</name>
</gene>
<reference key="1">
    <citation type="journal article" date="2009" name="PLoS Genet.">
        <title>Organised genome dynamics in the Escherichia coli species results in highly diverse adaptive paths.</title>
        <authorList>
            <person name="Touchon M."/>
            <person name="Hoede C."/>
            <person name="Tenaillon O."/>
            <person name="Barbe V."/>
            <person name="Baeriswyl S."/>
            <person name="Bidet P."/>
            <person name="Bingen E."/>
            <person name="Bonacorsi S."/>
            <person name="Bouchier C."/>
            <person name="Bouvet O."/>
            <person name="Calteau A."/>
            <person name="Chiapello H."/>
            <person name="Clermont O."/>
            <person name="Cruveiller S."/>
            <person name="Danchin A."/>
            <person name="Diard M."/>
            <person name="Dossat C."/>
            <person name="Karoui M.E."/>
            <person name="Frapy E."/>
            <person name="Garry L."/>
            <person name="Ghigo J.M."/>
            <person name="Gilles A.M."/>
            <person name="Johnson J."/>
            <person name="Le Bouguenec C."/>
            <person name="Lescat M."/>
            <person name="Mangenot S."/>
            <person name="Martinez-Jehanne V."/>
            <person name="Matic I."/>
            <person name="Nassif X."/>
            <person name="Oztas S."/>
            <person name="Petit M.A."/>
            <person name="Pichon C."/>
            <person name="Rouy Z."/>
            <person name="Ruf C.S."/>
            <person name="Schneider D."/>
            <person name="Tourret J."/>
            <person name="Vacherie B."/>
            <person name="Vallenet D."/>
            <person name="Medigue C."/>
            <person name="Rocha E.P.C."/>
            <person name="Denamur E."/>
        </authorList>
    </citation>
    <scope>NUCLEOTIDE SEQUENCE [LARGE SCALE GENOMIC DNA]</scope>
    <source>
        <strain>ATCC 35469 / DSM 13698 / BCRC 15582 / CCUG 18766 / IAM 14443 / JCM 21226 / LMG 7866 / NBRC 102419 / NCTC 12128 / CDC 0568-73</strain>
    </source>
</reference>
<proteinExistence type="inferred from homology"/>